<reference key="1">
    <citation type="submission" date="1999-03" db="EMBL/GenBank/DDBJ databases">
        <title>Implantation-associated uterine protein.</title>
        <authorList>
            <person name="Barkai U."/>
            <person name="Amit A."/>
            <person name="Lessing J.B."/>
            <person name="Kraicer P.F."/>
            <person name="Kidron T."/>
        </authorList>
    </citation>
    <scope>NUCLEOTIDE SEQUENCE [MRNA]</scope>
    <source>
        <strain>Wistar</strain>
        <tissue>Uterus</tissue>
    </source>
</reference>
<accession>O35777</accession>
<organism>
    <name type="scientific">Rattus norvegicus</name>
    <name type="common">Rat</name>
    <dbReference type="NCBI Taxonomy" id="10116"/>
    <lineage>
        <taxon>Eukaryota</taxon>
        <taxon>Metazoa</taxon>
        <taxon>Chordata</taxon>
        <taxon>Craniata</taxon>
        <taxon>Vertebrata</taxon>
        <taxon>Euteleostomi</taxon>
        <taxon>Mammalia</taxon>
        <taxon>Eutheria</taxon>
        <taxon>Euarchontoglires</taxon>
        <taxon>Glires</taxon>
        <taxon>Rodentia</taxon>
        <taxon>Myomorpha</taxon>
        <taxon>Muroidea</taxon>
        <taxon>Muridae</taxon>
        <taxon>Murinae</taxon>
        <taxon>Rattus</taxon>
    </lineage>
</organism>
<gene>
    <name evidence="6" type="primary">Magt1</name>
    <name type="synonym">Iag2</name>
</gene>
<evidence type="ECO:0000250" key="1"/>
<evidence type="ECO:0000250" key="2">
    <source>
        <dbReference type="UniProtKB" id="Q9CQY5"/>
    </source>
</evidence>
<evidence type="ECO:0000250" key="3">
    <source>
        <dbReference type="UniProtKB" id="Q9H0U3"/>
    </source>
</evidence>
<evidence type="ECO:0000255" key="4"/>
<evidence type="ECO:0000305" key="5"/>
<evidence type="ECO:0000312" key="6">
    <source>
        <dbReference type="RGD" id="620094"/>
    </source>
</evidence>
<keyword id="KW-1003">Cell membrane</keyword>
<keyword id="KW-1015">Disulfide bond</keyword>
<keyword id="KW-0256">Endoplasmic reticulum</keyword>
<keyword id="KW-0325">Glycoprotein</keyword>
<keyword id="KW-0460">Magnesium</keyword>
<keyword id="KW-0472">Membrane</keyword>
<keyword id="KW-1185">Reference proteome</keyword>
<keyword id="KW-0732">Signal</keyword>
<keyword id="KW-0812">Transmembrane</keyword>
<keyword id="KW-1133">Transmembrane helix</keyword>
<keyword id="KW-0813">Transport</keyword>
<protein>
    <recommendedName>
        <fullName>Dolichyl-diphosphooligosaccharide--protein glycosyltransferase subunit MAGT1</fullName>
        <shortName>Oligosaccharyl transferase subunit MAGT1</shortName>
    </recommendedName>
    <alternativeName>
        <fullName>Implantation-associated protein</fullName>
        <shortName>IAP</shortName>
    </alternativeName>
    <alternativeName>
        <fullName evidence="5">Magnesium transporter protein 1</fullName>
        <shortName>MagT1</shortName>
    </alternativeName>
</protein>
<comment type="function">
    <text evidence="2 3">Accessory component of the STT3B-containing form of the N-oligosaccharyl transferase (OST) complex which catalyzes the transfer of a high mannose oligosaccharide from a lipid-linked oligosaccharide donor to an asparagine residue within an Asn-X-Ser/Thr consensus motif in nascent polypeptide chains. Involved in N-glycosylation of STT3B-dependent substrates. Specifically required for the glycosylation of a subset of acceptor sites that are near cysteine residues; in this function seems to act redundantly with TUSC3. In its oxidized form proposed to form transient mixed disulfides with a glycoprotein substrate to facilitate access of STT3B to the unmodified acceptor site. Also has oxidoreductase-independent functions in the STT3B-containing OST complex possibly involving substrate recognition. Could indirectly play a role in Mg(2+) transport in epithelial cells.</text>
</comment>
<comment type="pathway">
    <text evidence="3">Protein modification; protein glycosylation.</text>
</comment>
<comment type="subunit">
    <text evidence="3">Accessory component of the STT3B-containing form of the oligosaccharyltransferase (OST) complex. OST exists in two different complex forms which contain common core subunits RPN1, RPN2, OST48, OST4, DAD1 and TMEM258, either STT3A or STT3B as catalytic subunits, and form-specific accessory subunits. OST can form stable complexes with the Sec61 complex or with both the Sec61 and TRAP complexes. The association of TUSC3 or MAGT1 with the STT3B-containing complex seems to be mutually exclusvice.</text>
</comment>
<comment type="subcellular location">
    <subcellularLocation>
        <location evidence="3">Cell membrane</location>
        <topology evidence="3">Multi-pass membrane protein</topology>
    </subcellularLocation>
    <subcellularLocation>
        <location evidence="3">Endoplasmic reticulum</location>
    </subcellularLocation>
    <subcellularLocation>
        <location evidence="1">Endoplasmic reticulum membrane</location>
        <topology evidence="1">Multi-pass membrane protein</topology>
    </subcellularLocation>
</comment>
<comment type="similarity">
    <text evidence="5">Belongs to the OST3/OST6 family.</text>
</comment>
<sequence>MASPRWLWCVCATAAVTLLLVSKVPSASAQRKKEKVLVEKVIQLMEWTNQRPVIRMNGDKFRPLVKAPPRNYSVIVMFTALQLHRQCVVCKQADEEFQILANFWRYSSAFTNRIFFAMVDFDEGSDVFQMLNMNSAPTFINFPPKGKPKRADTYELQVRGFSAEQIARWIADRTDVNIRVIRPPNYAGPLMLGLLLAVIGGLVYLRRSNMEFLFNKTGWAFAALCFVLAMTSGQMWNHIRGPPYAHKNPHTGHVNYIHGSSQAQFVAETHIVLLFNGGVTLGMVLLCEAAASDMDIGKRRMMCIAGIGLVVLFFSWMLSIFRSKYHGYPYSFLMS</sequence>
<feature type="signal peptide" evidence="4">
    <location>
        <begin position="1"/>
        <end position="29"/>
    </location>
</feature>
<feature type="chain" id="PRO_0000215301" description="Dolichyl-diphosphooligosaccharide--protein glycosyltransferase subunit MAGT1">
    <location>
        <begin position="30"/>
        <end position="335"/>
    </location>
</feature>
<feature type="topological domain" description="Extracellular" evidence="4">
    <location>
        <begin position="30"/>
        <end position="184"/>
    </location>
</feature>
<feature type="transmembrane region" description="Helical" evidence="4">
    <location>
        <begin position="185"/>
        <end position="205"/>
    </location>
</feature>
<feature type="topological domain" description="Cytoplasmic" evidence="4">
    <location>
        <begin position="206"/>
        <end position="209"/>
    </location>
</feature>
<feature type="transmembrane region" description="Helical" evidence="4">
    <location>
        <begin position="210"/>
        <end position="230"/>
    </location>
</feature>
<feature type="topological domain" description="Extracellular" evidence="4">
    <location>
        <begin position="231"/>
        <end position="270"/>
    </location>
</feature>
<feature type="transmembrane region" description="Helical" evidence="4">
    <location>
        <begin position="271"/>
        <end position="291"/>
    </location>
</feature>
<feature type="topological domain" description="Cytoplasmic" evidence="4">
    <location>
        <begin position="292"/>
        <end position="300"/>
    </location>
</feature>
<feature type="transmembrane region" description="Helical" evidence="4">
    <location>
        <begin position="301"/>
        <end position="321"/>
    </location>
</feature>
<feature type="topological domain" description="Extracellular" evidence="4">
    <location>
        <begin position="322"/>
        <end position="335"/>
    </location>
</feature>
<feature type="domain" description="Thioredoxin">
    <location>
        <begin position="47"/>
        <end position="175"/>
    </location>
</feature>
<feature type="glycosylation site" description="N-linked (GlcNAc...) asparagine" evidence="4">
    <location>
        <position position="71"/>
    </location>
</feature>
<feature type="disulfide bond" description="Redox-active" evidence="1">
    <location>
        <begin position="87"/>
        <end position="90"/>
    </location>
</feature>
<name>MAGT1_RAT</name>
<proteinExistence type="evidence at transcript level"/>
<dbReference type="EMBL" id="AF008554">
    <property type="protein sequence ID" value="AAB63294.2"/>
    <property type="molecule type" value="mRNA"/>
</dbReference>
<dbReference type="RefSeq" id="NP_446398.1">
    <property type="nucleotide sequence ID" value="NM_053946.1"/>
</dbReference>
<dbReference type="SMR" id="O35777"/>
<dbReference type="FunCoup" id="O35777">
    <property type="interactions" value="1368"/>
</dbReference>
<dbReference type="STRING" id="10116.ENSRNOP00000073419"/>
<dbReference type="GlyCosmos" id="O35777">
    <property type="glycosylation" value="1 site, No reported glycans"/>
</dbReference>
<dbReference type="GlyGen" id="O35777">
    <property type="glycosylation" value="1 site"/>
</dbReference>
<dbReference type="PhosphoSitePlus" id="O35777"/>
<dbReference type="PaxDb" id="10116-ENSRNOP00000062502"/>
<dbReference type="PeptideAtlas" id="O35777"/>
<dbReference type="GeneID" id="116967"/>
<dbReference type="KEGG" id="rno:116967"/>
<dbReference type="UCSC" id="RGD:620094">
    <property type="organism name" value="rat"/>
</dbReference>
<dbReference type="AGR" id="RGD:620094"/>
<dbReference type="CTD" id="84061"/>
<dbReference type="RGD" id="620094">
    <property type="gene designation" value="Magt1"/>
</dbReference>
<dbReference type="eggNOG" id="KOG2603">
    <property type="taxonomic scope" value="Eukaryota"/>
</dbReference>
<dbReference type="InParanoid" id="O35777"/>
<dbReference type="PhylomeDB" id="O35777"/>
<dbReference type="Reactome" id="R-RNO-5223345">
    <property type="pathway name" value="Miscellaneous transport and binding events"/>
</dbReference>
<dbReference type="Reactome" id="R-RNO-6798695">
    <property type="pathway name" value="Neutrophil degranulation"/>
</dbReference>
<dbReference type="UniPathway" id="UPA00378"/>
<dbReference type="PRO" id="PR:O35777"/>
<dbReference type="Proteomes" id="UP000002494">
    <property type="component" value="Unplaced"/>
</dbReference>
<dbReference type="GO" id="GO:0005783">
    <property type="term" value="C:endoplasmic reticulum"/>
    <property type="evidence" value="ECO:0000266"/>
    <property type="project" value="RGD"/>
</dbReference>
<dbReference type="GO" id="GO:0008250">
    <property type="term" value="C:oligosaccharyltransferase complex"/>
    <property type="evidence" value="ECO:0000250"/>
    <property type="project" value="HGNC-UCL"/>
</dbReference>
<dbReference type="GO" id="GO:0160227">
    <property type="term" value="C:oligosaccharyltransferase complex B"/>
    <property type="evidence" value="ECO:0000266"/>
    <property type="project" value="RGD"/>
</dbReference>
<dbReference type="GO" id="GO:0005886">
    <property type="term" value="C:plasma membrane"/>
    <property type="evidence" value="ECO:0007669"/>
    <property type="project" value="UniProtKB-SubCell"/>
</dbReference>
<dbReference type="GO" id="GO:0050890">
    <property type="term" value="P:cognition"/>
    <property type="evidence" value="ECO:0000266"/>
    <property type="project" value="RGD"/>
</dbReference>
<dbReference type="GO" id="GO:0015693">
    <property type="term" value="P:magnesium ion transport"/>
    <property type="evidence" value="ECO:0000266"/>
    <property type="project" value="RGD"/>
</dbReference>
<dbReference type="GO" id="GO:0006487">
    <property type="term" value="P:protein N-linked glycosylation"/>
    <property type="evidence" value="ECO:0000266"/>
    <property type="project" value="RGD"/>
</dbReference>
<dbReference type="GO" id="GO:0018279">
    <property type="term" value="P:protein N-linked glycosylation via asparagine"/>
    <property type="evidence" value="ECO:0000266"/>
    <property type="project" value="RGD"/>
</dbReference>
<dbReference type="FunFam" id="3.40.30.10:FF:000009">
    <property type="entry name" value="Tumor suppressor candidate 3"/>
    <property type="match status" value="1"/>
</dbReference>
<dbReference type="Gene3D" id="3.40.30.10">
    <property type="entry name" value="Glutaredoxin"/>
    <property type="match status" value="1"/>
</dbReference>
<dbReference type="InterPro" id="IPR021149">
    <property type="entry name" value="OligosaccharylTrfase_OST3/OST6"/>
</dbReference>
<dbReference type="InterPro" id="IPR036249">
    <property type="entry name" value="Thioredoxin-like_sf"/>
</dbReference>
<dbReference type="PANTHER" id="PTHR12692">
    <property type="entry name" value="DOLICHYL-DIPHOSPHOOLIGOSACCHARIDE--PROTEIN GLYCOSYLTRANSFERASE-RELATED"/>
    <property type="match status" value="1"/>
</dbReference>
<dbReference type="PANTHER" id="PTHR12692:SF2">
    <property type="entry name" value="MAGNESIUM TRANSPORTER PROTEIN 1"/>
    <property type="match status" value="1"/>
</dbReference>
<dbReference type="Pfam" id="PF04756">
    <property type="entry name" value="OST3_OST6"/>
    <property type="match status" value="1"/>
</dbReference>
<dbReference type="SUPFAM" id="SSF52833">
    <property type="entry name" value="Thioredoxin-like"/>
    <property type="match status" value="1"/>
</dbReference>